<feature type="chain" id="PRO_0000399963" description="Protein NRT1/ PTR FAMILY 5.5">
    <location>
        <begin position="1"/>
        <end position="521"/>
    </location>
</feature>
<feature type="transmembrane region" description="Helical" evidence="2">
    <location>
        <begin position="3"/>
        <end position="23"/>
    </location>
</feature>
<feature type="transmembrane region" description="Helical" evidence="2">
    <location>
        <begin position="35"/>
        <end position="55"/>
    </location>
</feature>
<feature type="transmembrane region" description="Helical" evidence="2">
    <location>
        <begin position="62"/>
        <end position="82"/>
    </location>
</feature>
<feature type="transmembrane region" description="Helical" evidence="2">
    <location>
        <begin position="96"/>
        <end position="116"/>
    </location>
</feature>
<feature type="transmembrane region" description="Helical" evidence="2">
    <location>
        <begin position="134"/>
        <end position="154"/>
    </location>
</feature>
<feature type="transmembrane region" description="Helical" evidence="2">
    <location>
        <begin position="165"/>
        <end position="185"/>
    </location>
</feature>
<feature type="transmembrane region" description="Helical" evidence="2">
    <location>
        <begin position="279"/>
        <end position="299"/>
    </location>
</feature>
<feature type="transmembrane region" description="Helical" evidence="2">
    <location>
        <begin position="310"/>
        <end position="327"/>
    </location>
</feature>
<feature type="transmembrane region" description="Helical" evidence="2">
    <location>
        <begin position="356"/>
        <end position="376"/>
    </location>
</feature>
<feature type="transmembrane region" description="Helical" evidence="2">
    <location>
        <begin position="394"/>
        <end position="414"/>
    </location>
</feature>
<feature type="transmembrane region" description="Helical" evidence="2">
    <location>
        <begin position="440"/>
        <end position="460"/>
    </location>
</feature>
<feature type="transmembrane region" description="Helical" evidence="2">
    <location>
        <begin position="478"/>
        <end position="498"/>
    </location>
</feature>
<evidence type="ECO:0000250" key="1"/>
<evidence type="ECO:0000255" key="2"/>
<evidence type="ECO:0000269" key="3">
    <source>
    </source>
</evidence>
<evidence type="ECO:0000305" key="4"/>
<protein>
    <recommendedName>
        <fullName>Protein NRT1/ PTR FAMILY 5.5</fullName>
        <shortName>AtNPF5.5</shortName>
    </recommendedName>
</protein>
<sequence length="521" mass="57843">MSVLSWAFTVAWFTLWMLMLYLTNEMKLKFTDAAAIVNVFAGVSAIGHLGMQFLVDAFIGHFWMLCLSTLAFSFGFGFLAISASPILSGNGQKGLFYVALTVISVGIFGRSISLGVFTEDQLEDGRNKGNPAKLVSFVIGNVGNFVFLLLAAIAMPQISPWFVRFTIPSGCEVLAMLIFISGACSYKRVKPGGSPLTTVFRVFMASASKMSCAYSNNSSQLYEKAECDQDIKPHTSSLRYLDRAAMILQTESLEQQRKNRWKLCRVTEVEQTKSVIRTVPLFATSLISGIVFSLGNTFFLEQANHMDSKFGSWNLPLPLLLLFSEAARLGSRELCVMAAKRHAIDFPESPKQTKTPYGIPVSIILSIFCCSIAAHVESRRLKVVSTQGLLHETVPMSVFWLLPQYILLGSITGIYENSFALYLEETVPEELSQYMVLLNVGVCGVGIMSNIALVSLVGSVSGGKWFQDTINKSRVDNYYWVITVFCMFNLLLYFIVTYRYTVCNKKDGATQENDRRIIASV</sequence>
<name>PTR29_ARATH</name>
<keyword id="KW-0472">Membrane</keyword>
<keyword id="KW-1185">Reference proteome</keyword>
<keyword id="KW-0812">Transmembrane</keyword>
<keyword id="KW-1133">Transmembrane helix</keyword>
<keyword id="KW-0813">Transport</keyword>
<proteinExistence type="evidence at transcript level"/>
<dbReference type="EMBL" id="AC003028">
    <property type="protein sequence ID" value="AAC27159.1"/>
    <property type="molecule type" value="Genomic_DNA"/>
</dbReference>
<dbReference type="EMBL" id="CP002685">
    <property type="protein sequence ID" value="AEC09489.1"/>
    <property type="molecule type" value="Genomic_DNA"/>
</dbReference>
<dbReference type="PIR" id="T01242">
    <property type="entry name" value="T01242"/>
</dbReference>
<dbReference type="RefSeq" id="NP_181345.1">
    <property type="nucleotide sequence ID" value="NM_129366.1"/>
</dbReference>
<dbReference type="SMR" id="O80436"/>
<dbReference type="FunCoup" id="O80436">
    <property type="interactions" value="1"/>
</dbReference>
<dbReference type="STRING" id="3702.O80436"/>
<dbReference type="PaxDb" id="3702-AT2G38100.1"/>
<dbReference type="EnsemblPlants" id="AT2G38100.1">
    <property type="protein sequence ID" value="AT2G38100.1"/>
    <property type="gene ID" value="AT2G38100"/>
</dbReference>
<dbReference type="GeneID" id="818388"/>
<dbReference type="Gramene" id="AT2G38100.1">
    <property type="protein sequence ID" value="AT2G38100.1"/>
    <property type="gene ID" value="AT2G38100"/>
</dbReference>
<dbReference type="KEGG" id="ath:AT2G38100"/>
<dbReference type="Araport" id="AT2G38100"/>
<dbReference type="TAIR" id="AT2G38100">
    <property type="gene designation" value="NPF5.5"/>
</dbReference>
<dbReference type="eggNOG" id="KOG1237">
    <property type="taxonomic scope" value="Eukaryota"/>
</dbReference>
<dbReference type="HOGENOM" id="CLU_009313_4_1_1"/>
<dbReference type="InParanoid" id="O80436"/>
<dbReference type="PhylomeDB" id="O80436"/>
<dbReference type="PRO" id="PR:O80436"/>
<dbReference type="Proteomes" id="UP000006548">
    <property type="component" value="Chromosome 2"/>
</dbReference>
<dbReference type="ExpressionAtlas" id="O80436">
    <property type="expression patterns" value="baseline and differential"/>
</dbReference>
<dbReference type="GO" id="GO:0016020">
    <property type="term" value="C:membrane"/>
    <property type="evidence" value="ECO:0007669"/>
    <property type="project" value="UniProtKB-SubCell"/>
</dbReference>
<dbReference type="GO" id="GO:0022857">
    <property type="term" value="F:transmembrane transporter activity"/>
    <property type="evidence" value="ECO:0007669"/>
    <property type="project" value="InterPro"/>
</dbReference>
<dbReference type="Gene3D" id="1.20.1250.20">
    <property type="entry name" value="MFS general substrate transporter like domains"/>
    <property type="match status" value="1"/>
</dbReference>
<dbReference type="InterPro" id="IPR036259">
    <property type="entry name" value="MFS_trans_sf"/>
</dbReference>
<dbReference type="InterPro" id="IPR000109">
    <property type="entry name" value="POT_fam"/>
</dbReference>
<dbReference type="PANTHER" id="PTHR11654">
    <property type="entry name" value="OLIGOPEPTIDE TRANSPORTER-RELATED"/>
    <property type="match status" value="1"/>
</dbReference>
<dbReference type="Pfam" id="PF00854">
    <property type="entry name" value="PTR2"/>
    <property type="match status" value="1"/>
</dbReference>
<dbReference type="SUPFAM" id="SSF103473">
    <property type="entry name" value="MFS general substrate transporter"/>
    <property type="match status" value="1"/>
</dbReference>
<reference key="1">
    <citation type="journal article" date="1999" name="Nature">
        <title>Sequence and analysis of chromosome 2 of the plant Arabidopsis thaliana.</title>
        <authorList>
            <person name="Lin X."/>
            <person name="Kaul S."/>
            <person name="Rounsley S.D."/>
            <person name="Shea T.P."/>
            <person name="Benito M.-I."/>
            <person name="Town C.D."/>
            <person name="Fujii C.Y."/>
            <person name="Mason T.M."/>
            <person name="Bowman C.L."/>
            <person name="Barnstead M.E."/>
            <person name="Feldblyum T.V."/>
            <person name="Buell C.R."/>
            <person name="Ketchum K.A."/>
            <person name="Lee J.J."/>
            <person name="Ronning C.M."/>
            <person name="Koo H.L."/>
            <person name="Moffat K.S."/>
            <person name="Cronin L.A."/>
            <person name="Shen M."/>
            <person name="Pai G."/>
            <person name="Van Aken S."/>
            <person name="Umayam L."/>
            <person name="Tallon L.J."/>
            <person name="Gill J.E."/>
            <person name="Adams M.D."/>
            <person name="Carrera A.J."/>
            <person name="Creasy T.H."/>
            <person name="Goodman H.M."/>
            <person name="Somerville C.R."/>
            <person name="Copenhaver G.P."/>
            <person name="Preuss D."/>
            <person name="Nierman W.C."/>
            <person name="White O."/>
            <person name="Eisen J.A."/>
            <person name="Salzberg S.L."/>
            <person name="Fraser C.M."/>
            <person name="Venter J.C."/>
        </authorList>
    </citation>
    <scope>NUCLEOTIDE SEQUENCE [LARGE SCALE GENOMIC DNA]</scope>
    <source>
        <strain>cv. Columbia</strain>
    </source>
</reference>
<reference key="2">
    <citation type="journal article" date="2017" name="Plant J.">
        <title>Araport11: a complete reannotation of the Arabidopsis thaliana reference genome.</title>
        <authorList>
            <person name="Cheng C.Y."/>
            <person name="Krishnakumar V."/>
            <person name="Chan A.P."/>
            <person name="Thibaud-Nissen F."/>
            <person name="Schobel S."/>
            <person name="Town C.D."/>
        </authorList>
    </citation>
    <scope>GENOME REANNOTATION</scope>
    <source>
        <strain>cv. Columbia</strain>
    </source>
</reference>
<reference key="3">
    <citation type="journal article" date="2007" name="FEBS Lett.">
        <title>Nitrate transporters and peptide transporters.</title>
        <authorList>
            <person name="Tsay Y.F."/>
            <person name="Chiu C.C."/>
            <person name="Tsai C.B."/>
            <person name="Ho C.H."/>
            <person name="Hsu P.K."/>
        </authorList>
    </citation>
    <scope>TISSUE SPECIFICITY</scope>
    <scope>GENE FAMILY</scope>
</reference>
<reference key="4">
    <citation type="journal article" date="2010" name="Plant Cell">
        <title>The Arabidopsis nitrate transporter NRT1.8 functions in nitrate removal from the xylem sap and mediates cadmium tolerance.</title>
        <authorList>
            <person name="Li J.Y."/>
            <person name="Fu Y.L."/>
            <person name="Pike S.M."/>
            <person name="Bao J."/>
            <person name="Tian W."/>
            <person name="Zhang Y."/>
            <person name="Chen C.Z."/>
            <person name="Zhang Y."/>
            <person name="Li H.M."/>
            <person name="Huang J."/>
            <person name="Li L.G."/>
            <person name="Schroeder J.I."/>
            <person name="Gassmann W."/>
            <person name="Gong J.M."/>
        </authorList>
    </citation>
    <scope>GENE FAMILY</scope>
</reference>
<reference key="5">
    <citation type="journal article" date="2014" name="Trends Plant Sci.">
        <title>A unified nomenclature of NITRATE TRANSPORTER 1/PEPTIDE TRANSPORTER family members in plants.</title>
        <authorList>
            <person name="Leran S."/>
            <person name="Varala K."/>
            <person name="Boyer J.C."/>
            <person name="Chiurazzi M."/>
            <person name="Crawford N."/>
            <person name="Daniel-Vedele F."/>
            <person name="David L."/>
            <person name="Dickstein R."/>
            <person name="Fernandez E."/>
            <person name="Forde B."/>
            <person name="Gassmann W."/>
            <person name="Geiger D."/>
            <person name="Gojon A."/>
            <person name="Gong J.M."/>
            <person name="Halkier B.A."/>
            <person name="Harris J.M."/>
            <person name="Hedrich R."/>
            <person name="Limami A.M."/>
            <person name="Rentsch D."/>
            <person name="Seo M."/>
            <person name="Tsay Y.F."/>
            <person name="Zhang M."/>
            <person name="Coruzzi G."/>
            <person name="Lacombe B."/>
        </authorList>
    </citation>
    <scope>GENE FAMILY</scope>
    <scope>NOMENCLATURE</scope>
</reference>
<comment type="subcellular location">
    <subcellularLocation>
        <location evidence="1">Membrane</location>
        <topology evidence="1">Multi-pass membrane protein</topology>
    </subcellularLocation>
</comment>
<comment type="tissue specificity">
    <text evidence="3">Expressed in roots.</text>
</comment>
<comment type="similarity">
    <text evidence="4">Belongs to the major facilitator superfamily. Proton-dependent oligopeptide transporter (POT/PTR) (TC 2.A.17) family.</text>
</comment>
<organism>
    <name type="scientific">Arabidopsis thaliana</name>
    <name type="common">Mouse-ear cress</name>
    <dbReference type="NCBI Taxonomy" id="3702"/>
    <lineage>
        <taxon>Eukaryota</taxon>
        <taxon>Viridiplantae</taxon>
        <taxon>Streptophyta</taxon>
        <taxon>Embryophyta</taxon>
        <taxon>Tracheophyta</taxon>
        <taxon>Spermatophyta</taxon>
        <taxon>Magnoliopsida</taxon>
        <taxon>eudicotyledons</taxon>
        <taxon>Gunneridae</taxon>
        <taxon>Pentapetalae</taxon>
        <taxon>rosids</taxon>
        <taxon>malvids</taxon>
        <taxon>Brassicales</taxon>
        <taxon>Brassicaceae</taxon>
        <taxon>Camelineae</taxon>
        <taxon>Arabidopsis</taxon>
    </lineage>
</organism>
<gene>
    <name type="primary">NPF5.5</name>
    <name type="ordered locus">At2g38100</name>
    <name type="ORF">F16M14.3</name>
</gene>
<accession>O80436</accession>